<evidence type="ECO:0000255" key="1">
    <source>
        <dbReference type="HAMAP-Rule" id="MF_00003"/>
    </source>
</evidence>
<comment type="function">
    <text evidence="1">One of several proteins that assist in the late maturation steps of the functional core of the 30S ribosomal subunit. Associates with free 30S ribosomal subunits (but not with 30S subunits that are part of 70S ribosomes or polysomes). Required for efficient processing of 16S rRNA. May interact with the 5'-terminal helix region of 16S rRNA.</text>
</comment>
<comment type="subunit">
    <text evidence="1">Monomer. Binds 30S ribosomal subunits, but not 50S ribosomal subunits or 70S ribosomes.</text>
</comment>
<comment type="subcellular location">
    <subcellularLocation>
        <location evidence="1">Cytoplasm</location>
    </subcellularLocation>
</comment>
<comment type="similarity">
    <text evidence="1">Belongs to the RbfA family.</text>
</comment>
<protein>
    <recommendedName>
        <fullName evidence="1">Ribosome-binding factor A</fullName>
    </recommendedName>
</protein>
<reference key="1">
    <citation type="journal article" date="2010" name="Genome Biol.">
        <title>Structure and dynamics of the pan-genome of Streptococcus pneumoniae and closely related species.</title>
        <authorList>
            <person name="Donati C."/>
            <person name="Hiller N.L."/>
            <person name="Tettelin H."/>
            <person name="Muzzi A."/>
            <person name="Croucher N.J."/>
            <person name="Angiuoli S.V."/>
            <person name="Oggioni M."/>
            <person name="Dunning Hotopp J.C."/>
            <person name="Hu F.Z."/>
            <person name="Riley D.R."/>
            <person name="Covacci A."/>
            <person name="Mitchell T.J."/>
            <person name="Bentley S.D."/>
            <person name="Kilian M."/>
            <person name="Ehrlich G.D."/>
            <person name="Rappuoli R."/>
            <person name="Moxon E.R."/>
            <person name="Masignani V."/>
        </authorList>
    </citation>
    <scope>NUCLEOTIDE SEQUENCE [LARGE SCALE GENOMIC DNA]</scope>
    <source>
        <strain>JJA</strain>
    </source>
</reference>
<accession>C1CCT9</accession>
<name>RBFA_STRZJ</name>
<proteinExistence type="inferred from homology"/>
<sequence length="116" mass="13338">MANHFRTDRVGMEIKREVNEILQKKVRDPRVQGVTITDVQMLGDLSVAKVYYTILSNLASDNQKVQIGLEKATGTIKRELGRNLKLYKIPDLTFVKDESIEYGNKIDEMLRNLDKN</sequence>
<feature type="chain" id="PRO_1000116219" description="Ribosome-binding factor A">
    <location>
        <begin position="1"/>
        <end position="116"/>
    </location>
</feature>
<organism>
    <name type="scientific">Streptococcus pneumoniae (strain JJA)</name>
    <dbReference type="NCBI Taxonomy" id="488222"/>
    <lineage>
        <taxon>Bacteria</taxon>
        <taxon>Bacillati</taxon>
        <taxon>Bacillota</taxon>
        <taxon>Bacilli</taxon>
        <taxon>Lactobacillales</taxon>
        <taxon>Streptococcaceae</taxon>
        <taxon>Streptococcus</taxon>
    </lineage>
</organism>
<dbReference type="EMBL" id="CP000919">
    <property type="protein sequence ID" value="ACO18617.1"/>
    <property type="molecule type" value="Genomic_DNA"/>
</dbReference>
<dbReference type="RefSeq" id="WP_001273603.1">
    <property type="nucleotide sequence ID" value="NC_012466.1"/>
</dbReference>
<dbReference type="SMR" id="C1CCT9"/>
<dbReference type="KEGG" id="sjj:SPJ_0517"/>
<dbReference type="HOGENOM" id="CLU_089475_3_0_9"/>
<dbReference type="Proteomes" id="UP000002206">
    <property type="component" value="Chromosome"/>
</dbReference>
<dbReference type="GO" id="GO:0005829">
    <property type="term" value="C:cytosol"/>
    <property type="evidence" value="ECO:0007669"/>
    <property type="project" value="TreeGrafter"/>
</dbReference>
<dbReference type="GO" id="GO:0043024">
    <property type="term" value="F:ribosomal small subunit binding"/>
    <property type="evidence" value="ECO:0007669"/>
    <property type="project" value="TreeGrafter"/>
</dbReference>
<dbReference type="GO" id="GO:0030490">
    <property type="term" value="P:maturation of SSU-rRNA"/>
    <property type="evidence" value="ECO:0007669"/>
    <property type="project" value="UniProtKB-UniRule"/>
</dbReference>
<dbReference type="FunFam" id="3.30.300.20:FF:000012">
    <property type="entry name" value="Ribosome-binding factor A"/>
    <property type="match status" value="1"/>
</dbReference>
<dbReference type="Gene3D" id="3.30.300.20">
    <property type="match status" value="1"/>
</dbReference>
<dbReference type="HAMAP" id="MF_00003">
    <property type="entry name" value="RbfA"/>
    <property type="match status" value="1"/>
</dbReference>
<dbReference type="InterPro" id="IPR015946">
    <property type="entry name" value="KH_dom-like_a/b"/>
</dbReference>
<dbReference type="InterPro" id="IPR000238">
    <property type="entry name" value="RbfA"/>
</dbReference>
<dbReference type="InterPro" id="IPR023799">
    <property type="entry name" value="RbfA_dom_sf"/>
</dbReference>
<dbReference type="InterPro" id="IPR020053">
    <property type="entry name" value="Ribosome-bd_factorA_CS"/>
</dbReference>
<dbReference type="NCBIfam" id="TIGR00082">
    <property type="entry name" value="rbfA"/>
    <property type="match status" value="1"/>
</dbReference>
<dbReference type="PANTHER" id="PTHR33515">
    <property type="entry name" value="RIBOSOME-BINDING FACTOR A, CHLOROPLASTIC-RELATED"/>
    <property type="match status" value="1"/>
</dbReference>
<dbReference type="PANTHER" id="PTHR33515:SF1">
    <property type="entry name" value="RIBOSOME-BINDING FACTOR A, CHLOROPLASTIC-RELATED"/>
    <property type="match status" value="1"/>
</dbReference>
<dbReference type="Pfam" id="PF02033">
    <property type="entry name" value="RBFA"/>
    <property type="match status" value="1"/>
</dbReference>
<dbReference type="SUPFAM" id="SSF89919">
    <property type="entry name" value="Ribosome-binding factor A, RbfA"/>
    <property type="match status" value="1"/>
</dbReference>
<dbReference type="PROSITE" id="PS01319">
    <property type="entry name" value="RBFA"/>
    <property type="match status" value="1"/>
</dbReference>
<gene>
    <name evidence="1" type="primary">rbfA</name>
    <name type="ordered locus">SPJ_0517</name>
</gene>
<keyword id="KW-0963">Cytoplasm</keyword>
<keyword id="KW-0690">Ribosome biogenesis</keyword>